<feature type="chain" id="PRO_0000222348" description="Protein P">
    <location>
        <begin position="1"/>
        <end position="879"/>
    </location>
</feature>
<feature type="domain" description="Reverse transcriptase" evidence="1">
    <location>
        <begin position="393"/>
        <end position="634"/>
    </location>
</feature>
<feature type="region of interest" description="Terminal protein domain (TP)" evidence="1">
    <location>
        <begin position="1"/>
        <end position="184"/>
    </location>
</feature>
<feature type="region of interest" description="Spacer" evidence="1">
    <location>
        <begin position="185"/>
        <end position="382"/>
    </location>
</feature>
<feature type="region of interest" description="Disordered" evidence="2">
    <location>
        <begin position="304"/>
        <end position="345"/>
    </location>
</feature>
<feature type="region of interest" description="Polymerase/reverse transcriptase domain (RT)" evidence="1">
    <location>
        <begin position="383"/>
        <end position="724"/>
    </location>
</feature>
<feature type="binding site" evidence="1">
    <location>
        <position position="465"/>
    </location>
    <ligand>
        <name>Mg(2+)</name>
        <dbReference type="ChEBI" id="CHEBI:18420"/>
        <note>catalytic</note>
    </ligand>
</feature>
<feature type="binding site" evidence="1">
    <location>
        <position position="585"/>
    </location>
    <ligand>
        <name>Mg(2+)</name>
        <dbReference type="ChEBI" id="CHEBI:18420"/>
        <note>catalytic</note>
    </ligand>
</feature>
<feature type="binding site" evidence="1">
    <location>
        <position position="586"/>
    </location>
    <ligand>
        <name>Mg(2+)</name>
        <dbReference type="ChEBI" id="CHEBI:18420"/>
        <note>catalytic</note>
    </ligand>
</feature>
<feature type="site" description="Priming of reverse-transcription by covalently linking the first nucleotide of the (-)DNA" evidence="1">
    <location>
        <position position="68"/>
    </location>
</feature>
<protein>
    <recommendedName>
        <fullName evidence="1">Protein P</fullName>
    </recommendedName>
    <domain>
        <recommendedName>
            <fullName evidence="1">DNA-directed DNA polymerase</fullName>
            <ecNumber evidence="1">2.7.7.7</ecNumber>
        </recommendedName>
    </domain>
    <domain>
        <recommendedName>
            <fullName evidence="1">RNA-directed DNA polymerase</fullName>
            <ecNumber evidence="1">2.7.7.49</ecNumber>
        </recommendedName>
    </domain>
    <domain>
        <recommendedName>
            <fullName evidence="1">Ribonuclease H</fullName>
            <ecNumber evidence="1">3.1.26.4</ecNumber>
        </recommendedName>
    </domain>
</protein>
<comment type="function">
    <text evidence="1">Multifunctional enzyme that converts the viral RNA genome into dsDNA in viral cytoplasmic capsids. This enzyme displays a DNA polymerase activity that can copy either DNA or RNA templates, and a ribonuclease H (RNase H) activity that cleaves the RNA strand of RNA-DNA heteroduplexes in a partially processive 3'- to 5'-endonucleasic mode. Neo-synthesized pregenomic RNA (pgRNA) are encapsidated together with the P protein, and reverse-transcribed inside the nucleocapsid. Initiation of reverse-transcription occurs first by binding the epsilon loop on the pgRNA genome, and is initiated by protein priming, thereby the 5'-end of (-)DNA is covalently linked to P protein. Partial (+)DNA is synthesized from the (-)DNA template and generates the relaxed circular DNA (RC-DNA) genome. After budding and infection, the RC-DNA migrates in the nucleus, and is converted into a plasmid-like covalently closed circular DNA (cccDNA). The activity of P protein does not seem to be necessary for cccDNA generation, and is presumably released from (+)DNA by host nuclear DNA repair machinery.</text>
</comment>
<comment type="catalytic activity">
    <reaction evidence="1">
        <text>DNA(n) + a 2'-deoxyribonucleoside 5'-triphosphate = DNA(n+1) + diphosphate</text>
        <dbReference type="Rhea" id="RHEA:22508"/>
        <dbReference type="Rhea" id="RHEA-COMP:17339"/>
        <dbReference type="Rhea" id="RHEA-COMP:17340"/>
        <dbReference type="ChEBI" id="CHEBI:33019"/>
        <dbReference type="ChEBI" id="CHEBI:61560"/>
        <dbReference type="ChEBI" id="CHEBI:173112"/>
        <dbReference type="EC" id="2.7.7.7"/>
    </reaction>
</comment>
<comment type="catalytic activity">
    <reaction evidence="1">
        <text>DNA(n) + a 2'-deoxyribonucleoside 5'-triphosphate = DNA(n+1) + diphosphate</text>
        <dbReference type="Rhea" id="RHEA:22508"/>
        <dbReference type="Rhea" id="RHEA-COMP:17339"/>
        <dbReference type="Rhea" id="RHEA-COMP:17340"/>
        <dbReference type="ChEBI" id="CHEBI:33019"/>
        <dbReference type="ChEBI" id="CHEBI:61560"/>
        <dbReference type="ChEBI" id="CHEBI:173112"/>
        <dbReference type="EC" id="2.7.7.49"/>
    </reaction>
</comment>
<comment type="catalytic activity">
    <reaction evidence="1">
        <text>Endonucleolytic cleavage to 5'-phosphomonoester.</text>
        <dbReference type="EC" id="3.1.26.4"/>
    </reaction>
</comment>
<comment type="activity regulation">
    <text evidence="1">Activated by host HSP70 and HSP40 in vitro to be able to bind the epsilon loop of the pgRNA. Because deletion of the RNase H region renders the protein partly chaperone-independent, the chaperones may be needed indirectly to relieve occlusion of the RNA-binding site by this domain. Inhibited by several reverse-transcriptase inhibitors: Lamivudine, Adefovir and Entecavir.</text>
</comment>
<comment type="domain">
    <text evidence="1">Terminal protein domain (TP) is hepadnavirus-specific. Spacer domain is highly variable and separates the TP and RT domains. Polymerase/reverse-transcriptase domain (RT) and ribonuclease H domain (RH) are similar to retrovirus reverse transcriptase/RNase H.</text>
</comment>
<comment type="domain">
    <text evidence="1">The polymerase/reverse transcriptase (RT) and ribonuclease H (RH) domains are structured in five subdomains: finger, palm, thumb, connection and RNase H. Within the palm subdomain, the 'primer grip' region is thought to be involved in the positioning of the primer terminus for accommodating the incoming nucleotide. The RH domain stabilizes the association of RT with primer-template.</text>
</comment>
<comment type="miscellaneous">
    <text evidence="1">Hepadnaviral virions contain probably just one P protein molecule per particle.</text>
</comment>
<comment type="similarity">
    <text evidence="1">Belongs to the hepadnaviridae P protein family.</text>
</comment>
<gene>
    <name evidence="1" type="primary">P</name>
</gene>
<proteinExistence type="inferred from homology"/>
<organism>
    <name type="scientific">Woodchuck hepatitis B virus (isolate 1)</name>
    <name type="common">WHV</name>
    <dbReference type="NCBI Taxonomy" id="10430"/>
    <lineage>
        <taxon>Viruses</taxon>
        <taxon>Riboviria</taxon>
        <taxon>Pararnavirae</taxon>
        <taxon>Artverviricota</taxon>
        <taxon>Revtraviricetes</taxon>
        <taxon>Blubervirales</taxon>
        <taxon>Hepadnaviridae</taxon>
        <taxon>Orthohepadnavirus</taxon>
        <taxon>Woodchuck hepatitis virus</taxon>
    </lineage>
</organism>
<evidence type="ECO:0000255" key="1">
    <source>
        <dbReference type="HAMAP-Rule" id="MF_04073"/>
    </source>
</evidence>
<evidence type="ECO:0000256" key="2">
    <source>
        <dbReference type="SAM" id="MobiDB-lite"/>
    </source>
</evidence>
<organismHost>
    <name type="scientific">Marmota monax</name>
    <name type="common">Woodchuck</name>
    <dbReference type="NCBI Taxonomy" id="9995"/>
</organismHost>
<reference key="1">
    <citation type="journal article" date="1982" name="J. Virol.">
        <title>Nucleotide sequence of a cloned woodchuck hepatitis virus genome: comparison with the hepatitis B virus sequence.</title>
        <authorList>
            <person name="Galibert F."/>
            <person name="Chen T.N."/>
            <person name="Mandart E."/>
        </authorList>
    </citation>
    <scope>NUCLEOTIDE SEQUENCE [GENOMIC DNA]</scope>
</reference>
<reference key="2">
    <citation type="journal article" date="2007" name="World J. Gastroenterol.">
        <title>Hepatitis B virus replication.</title>
        <authorList>
            <person name="Beck J."/>
            <person name="Nassal M."/>
        </authorList>
    </citation>
    <scope>REVIEW</scope>
</reference>
<accession>P03160</accession>
<keyword id="KW-0235">DNA replication</keyword>
<keyword id="KW-0238">DNA-binding</keyword>
<keyword id="KW-0239">DNA-directed DNA polymerase</keyword>
<keyword id="KW-0255">Endonuclease</keyword>
<keyword id="KW-0945">Host-virus interaction</keyword>
<keyword id="KW-0378">Hydrolase</keyword>
<keyword id="KW-1090">Inhibition of host innate immune response by virus</keyword>
<keyword id="KW-1113">Inhibition of host RLR pathway by virus</keyword>
<keyword id="KW-0460">Magnesium</keyword>
<keyword id="KW-0479">Metal-binding</keyword>
<keyword id="KW-0511">Multifunctional enzyme</keyword>
<keyword id="KW-0540">Nuclease</keyword>
<keyword id="KW-0548">Nucleotidyltransferase</keyword>
<keyword id="KW-0695">RNA-directed DNA polymerase</keyword>
<keyword id="KW-0808">Transferase</keyword>
<keyword id="KW-0899">Viral immunoevasion</keyword>
<name>DPOL_WHV1</name>
<sequence length="879" mass="99186">MHPFSRLFRNIQSLGEEEVQELLGPPEDALPLLAGEDLNHRVADALNLHLPTADLQWVHKTNAITGLYSNQAAQFNPHWIQPEFPELHLHNELIKKLQQYFGPLTINEKRKLQLNFPARFFPKATKYFPLIKGIKNNYPNFALEHFFATANYLWTLWEAGILYLRKNQTTLTFKGKPYSWEHRQLVQHNGQQHKSHLQSRQNSSVVACSGHLLHNHLPSEPVSVSTRNLSNNIFGKSQNSTRTGLCSHKQIQTDRLEHLARISCRSKTTIGQQGSSPKISSNFRNQTWAYNSSWNSGHTTWFSSASNSNKSRSREKAYSSNSTSKRYSPPLNYEKSDFSSPGVRGRIKRLDNNGTPTQCLWRSFYDTKPCGSYCIHHIVSSIDDWGPCTVTGDVTIKSPRTPRRITGGVFLVDKNPNNSSESRLVVDFSQFSRGHTRVHWPKFAVPNLQTLANLLSTDLQWLSLDVSAAFYHIPISPAAVPHLLVGSPGLERFNTCLSYSTHNRNDSQLQTMHNLCTRHVYSSLLLLFKTYGRKLHLLAHPFIMGFRKLPMGVGLSPFLLAQFTSALASMVRRNFPHCVVFAYMDDLVLGARTSEHLTAIYTHICSVFLDLGIHLNVNKTKWWGNHLHFMGYVITSSGVLPQDKHVKKLSRYLRSVPVNQPLDYKICERLTDILNYVAPFTLCGYAALMPLYHAIASRTAFVFSSLYKSWLLSLYEELWPVVRQRGVVCSVFADATPTGWGIATTCQLLSGTFAFPLPIATAELIAACLARCWTGARLLGTDNSVVLSGKLTSFPWLLACVANWILRGTSFCYVPSALNPADLPSRGLLPVLRPLPRLRFRPPTSRISLWAASPPVSPRRPVRVAWSSPVQNCEPWIPP</sequence>
<dbReference type="EC" id="2.7.7.7" evidence="1"/>
<dbReference type="EC" id="2.7.7.49" evidence="1"/>
<dbReference type="EC" id="3.1.26.4" evidence="1"/>
<dbReference type="EMBL" id="J02442">
    <property type="protein sequence ID" value="AAA46759.1"/>
    <property type="molecule type" value="Genomic_DNA"/>
</dbReference>
<dbReference type="PIR" id="A00707">
    <property type="entry name" value="JDVLC"/>
</dbReference>
<dbReference type="Proteomes" id="UP000007631">
    <property type="component" value="Genome"/>
</dbReference>
<dbReference type="GO" id="GO:0003677">
    <property type="term" value="F:DNA binding"/>
    <property type="evidence" value="ECO:0007669"/>
    <property type="project" value="UniProtKB-UniRule"/>
</dbReference>
<dbReference type="GO" id="GO:0003887">
    <property type="term" value="F:DNA-directed DNA polymerase activity"/>
    <property type="evidence" value="ECO:0007669"/>
    <property type="project" value="UniProtKB-UniRule"/>
</dbReference>
<dbReference type="GO" id="GO:0046872">
    <property type="term" value="F:metal ion binding"/>
    <property type="evidence" value="ECO:0007669"/>
    <property type="project" value="UniProtKB-UniRule"/>
</dbReference>
<dbReference type="GO" id="GO:0003964">
    <property type="term" value="F:RNA-directed DNA polymerase activity"/>
    <property type="evidence" value="ECO:0007669"/>
    <property type="project" value="UniProtKB-UniRule"/>
</dbReference>
<dbReference type="GO" id="GO:0004523">
    <property type="term" value="F:RNA-DNA hybrid ribonuclease activity"/>
    <property type="evidence" value="ECO:0007669"/>
    <property type="project" value="UniProtKB-UniRule"/>
</dbReference>
<dbReference type="GO" id="GO:0006260">
    <property type="term" value="P:DNA replication"/>
    <property type="evidence" value="ECO:0007669"/>
    <property type="project" value="UniProtKB-UniRule"/>
</dbReference>
<dbReference type="GO" id="GO:0052170">
    <property type="term" value="P:symbiont-mediated suppression of host innate immune response"/>
    <property type="evidence" value="ECO:0007669"/>
    <property type="project" value="UniProtKB-UniRule"/>
</dbReference>
<dbReference type="Gene3D" id="3.30.70.270">
    <property type="match status" value="1"/>
</dbReference>
<dbReference type="HAMAP" id="MF_04073">
    <property type="entry name" value="HBV_DPOL"/>
    <property type="match status" value="1"/>
</dbReference>
<dbReference type="InterPro" id="IPR043502">
    <property type="entry name" value="DNA/RNA_pol_sf"/>
</dbReference>
<dbReference type="InterPro" id="IPR001462">
    <property type="entry name" value="DNApol_viral_C"/>
</dbReference>
<dbReference type="InterPro" id="IPR000201">
    <property type="entry name" value="DNApol_viral_N"/>
</dbReference>
<dbReference type="InterPro" id="IPR037531">
    <property type="entry name" value="HBV_DPOL"/>
</dbReference>
<dbReference type="InterPro" id="IPR052055">
    <property type="entry name" value="Hepadnavirus_pol/RT"/>
</dbReference>
<dbReference type="InterPro" id="IPR043128">
    <property type="entry name" value="Rev_trsase/Diguanyl_cyclase"/>
</dbReference>
<dbReference type="InterPro" id="IPR000477">
    <property type="entry name" value="RT_dom"/>
</dbReference>
<dbReference type="PANTHER" id="PTHR33050">
    <property type="entry name" value="REVERSE TRANSCRIPTASE DOMAIN-CONTAINING PROTEIN"/>
    <property type="match status" value="1"/>
</dbReference>
<dbReference type="PANTHER" id="PTHR33050:SF7">
    <property type="entry name" value="RIBONUCLEASE H"/>
    <property type="match status" value="1"/>
</dbReference>
<dbReference type="Pfam" id="PF00336">
    <property type="entry name" value="DNA_pol_viral_C"/>
    <property type="match status" value="1"/>
</dbReference>
<dbReference type="Pfam" id="PF00242">
    <property type="entry name" value="DNA_pol_viral_N"/>
    <property type="match status" value="1"/>
</dbReference>
<dbReference type="Pfam" id="PF00078">
    <property type="entry name" value="RVT_1"/>
    <property type="match status" value="1"/>
</dbReference>
<dbReference type="SUPFAM" id="SSF56672">
    <property type="entry name" value="DNA/RNA polymerases"/>
    <property type="match status" value="1"/>
</dbReference>
<dbReference type="PROSITE" id="PS50878">
    <property type="entry name" value="RT_POL"/>
    <property type="match status" value="1"/>
</dbReference>